<dbReference type="EMBL" id="CP000605">
    <property type="protein sequence ID" value="ACD99155.1"/>
    <property type="molecule type" value="Genomic_DNA"/>
</dbReference>
<dbReference type="RefSeq" id="WP_007053034.1">
    <property type="nucleotide sequence ID" value="NZ_AABM02000025.1"/>
</dbReference>
<dbReference type="SMR" id="B3DQ16"/>
<dbReference type="GeneID" id="69578894"/>
<dbReference type="KEGG" id="blj:BLD_1710"/>
<dbReference type="HOGENOM" id="CLU_036235_2_1_11"/>
<dbReference type="Proteomes" id="UP000002419">
    <property type="component" value="Chromosome"/>
</dbReference>
<dbReference type="GO" id="GO:0015934">
    <property type="term" value="C:large ribosomal subunit"/>
    <property type="evidence" value="ECO:0007669"/>
    <property type="project" value="InterPro"/>
</dbReference>
<dbReference type="GO" id="GO:0019843">
    <property type="term" value="F:rRNA binding"/>
    <property type="evidence" value="ECO:0007669"/>
    <property type="project" value="UniProtKB-UniRule"/>
</dbReference>
<dbReference type="GO" id="GO:0003735">
    <property type="term" value="F:structural constituent of ribosome"/>
    <property type="evidence" value="ECO:0007669"/>
    <property type="project" value="InterPro"/>
</dbReference>
<dbReference type="GO" id="GO:0016740">
    <property type="term" value="F:transferase activity"/>
    <property type="evidence" value="ECO:0007669"/>
    <property type="project" value="InterPro"/>
</dbReference>
<dbReference type="GO" id="GO:0002181">
    <property type="term" value="P:cytoplasmic translation"/>
    <property type="evidence" value="ECO:0007669"/>
    <property type="project" value="TreeGrafter"/>
</dbReference>
<dbReference type="FunFam" id="2.30.30.30:FF:000001">
    <property type="entry name" value="50S ribosomal protein L2"/>
    <property type="match status" value="1"/>
</dbReference>
<dbReference type="FunFam" id="2.40.50.140:FF:000003">
    <property type="entry name" value="50S ribosomal protein L2"/>
    <property type="match status" value="1"/>
</dbReference>
<dbReference type="FunFam" id="4.10.950.10:FF:000001">
    <property type="entry name" value="50S ribosomal protein L2"/>
    <property type="match status" value="1"/>
</dbReference>
<dbReference type="Gene3D" id="2.30.30.30">
    <property type="match status" value="1"/>
</dbReference>
<dbReference type="Gene3D" id="2.40.50.140">
    <property type="entry name" value="Nucleic acid-binding proteins"/>
    <property type="match status" value="1"/>
</dbReference>
<dbReference type="Gene3D" id="4.10.950.10">
    <property type="entry name" value="Ribosomal protein L2, domain 3"/>
    <property type="match status" value="1"/>
</dbReference>
<dbReference type="HAMAP" id="MF_01320_B">
    <property type="entry name" value="Ribosomal_uL2_B"/>
    <property type="match status" value="1"/>
</dbReference>
<dbReference type="InterPro" id="IPR012340">
    <property type="entry name" value="NA-bd_OB-fold"/>
</dbReference>
<dbReference type="InterPro" id="IPR014722">
    <property type="entry name" value="Rib_uL2_dom2"/>
</dbReference>
<dbReference type="InterPro" id="IPR002171">
    <property type="entry name" value="Ribosomal_uL2"/>
</dbReference>
<dbReference type="InterPro" id="IPR005880">
    <property type="entry name" value="Ribosomal_uL2_bac/org-type"/>
</dbReference>
<dbReference type="InterPro" id="IPR022669">
    <property type="entry name" value="Ribosomal_uL2_C"/>
</dbReference>
<dbReference type="InterPro" id="IPR014726">
    <property type="entry name" value="Ribosomal_uL2_dom3"/>
</dbReference>
<dbReference type="InterPro" id="IPR022666">
    <property type="entry name" value="Ribosomal_uL2_RNA-bd_dom"/>
</dbReference>
<dbReference type="InterPro" id="IPR008991">
    <property type="entry name" value="Translation_prot_SH3-like_sf"/>
</dbReference>
<dbReference type="NCBIfam" id="TIGR01171">
    <property type="entry name" value="rplB_bact"/>
    <property type="match status" value="1"/>
</dbReference>
<dbReference type="PANTHER" id="PTHR13691:SF5">
    <property type="entry name" value="LARGE RIBOSOMAL SUBUNIT PROTEIN UL2M"/>
    <property type="match status" value="1"/>
</dbReference>
<dbReference type="PANTHER" id="PTHR13691">
    <property type="entry name" value="RIBOSOMAL PROTEIN L2"/>
    <property type="match status" value="1"/>
</dbReference>
<dbReference type="Pfam" id="PF00181">
    <property type="entry name" value="Ribosomal_L2"/>
    <property type="match status" value="1"/>
</dbReference>
<dbReference type="Pfam" id="PF03947">
    <property type="entry name" value="Ribosomal_L2_C"/>
    <property type="match status" value="1"/>
</dbReference>
<dbReference type="PIRSF" id="PIRSF002158">
    <property type="entry name" value="Ribosomal_L2"/>
    <property type="match status" value="1"/>
</dbReference>
<dbReference type="SMART" id="SM01383">
    <property type="entry name" value="Ribosomal_L2"/>
    <property type="match status" value="1"/>
</dbReference>
<dbReference type="SMART" id="SM01382">
    <property type="entry name" value="Ribosomal_L2_C"/>
    <property type="match status" value="1"/>
</dbReference>
<dbReference type="SUPFAM" id="SSF50249">
    <property type="entry name" value="Nucleic acid-binding proteins"/>
    <property type="match status" value="1"/>
</dbReference>
<dbReference type="SUPFAM" id="SSF50104">
    <property type="entry name" value="Translation proteins SH3-like domain"/>
    <property type="match status" value="1"/>
</dbReference>
<name>RL2_BIFLD</name>
<comment type="function">
    <text evidence="1">One of the primary rRNA binding proteins. Required for association of the 30S and 50S subunits to form the 70S ribosome, for tRNA binding and peptide bond formation. It has been suggested to have peptidyltransferase activity; this is somewhat controversial. Makes several contacts with the 16S rRNA in the 70S ribosome.</text>
</comment>
<comment type="subunit">
    <text evidence="1">Part of the 50S ribosomal subunit. Forms a bridge to the 30S subunit in the 70S ribosome.</text>
</comment>
<comment type="similarity">
    <text evidence="1">Belongs to the universal ribosomal protein uL2 family.</text>
</comment>
<proteinExistence type="inferred from homology"/>
<keyword id="KW-0687">Ribonucleoprotein</keyword>
<keyword id="KW-0689">Ribosomal protein</keyword>
<keyword id="KW-0694">RNA-binding</keyword>
<keyword id="KW-0699">rRNA-binding</keyword>
<protein>
    <recommendedName>
        <fullName evidence="1">Large ribosomal subunit protein uL2</fullName>
    </recommendedName>
    <alternativeName>
        <fullName evidence="3">50S ribosomal protein L2</fullName>
    </alternativeName>
</protein>
<evidence type="ECO:0000255" key="1">
    <source>
        <dbReference type="HAMAP-Rule" id="MF_01320"/>
    </source>
</evidence>
<evidence type="ECO:0000256" key="2">
    <source>
        <dbReference type="SAM" id="MobiDB-lite"/>
    </source>
</evidence>
<evidence type="ECO:0000305" key="3"/>
<organism>
    <name type="scientific">Bifidobacterium longum (strain DJO10A)</name>
    <dbReference type="NCBI Taxonomy" id="205913"/>
    <lineage>
        <taxon>Bacteria</taxon>
        <taxon>Bacillati</taxon>
        <taxon>Actinomycetota</taxon>
        <taxon>Actinomycetes</taxon>
        <taxon>Bifidobacteriales</taxon>
        <taxon>Bifidobacteriaceae</taxon>
        <taxon>Bifidobacterium</taxon>
    </lineage>
</organism>
<gene>
    <name evidence="1" type="primary">rplB</name>
    <name type="ordered locus">BLD_1710</name>
</gene>
<sequence>MAIRVYKPTTAGRRNASVSDFSELTRSTPEKSLVRKKSKTGGRNSYGRITSRHRGGGHKRQYRLIDFKRWDKDGVPAKVAEIEYDPNRSARIALLHFADGEKRYIIAPKGIKQGDVIETGAQADIKPGNNLPLKNIPTGTVVHAIELRPLGGAKIARSAGAAVQLVAKDGAYAQLRMPSGEIRNVDARCRATVGEVGNEDHANIQLGKAGRARWIGRRPITRGESMNPVDHPHGGRTRGGKPPVSPWGKGEVRTRRPKKASNKMIVRRRPSGKNRK</sequence>
<feature type="chain" id="PRO_1000141509" description="Large ribosomal subunit protein uL2">
    <location>
        <begin position="1"/>
        <end position="276"/>
    </location>
</feature>
<feature type="region of interest" description="Disordered" evidence="2">
    <location>
        <begin position="14"/>
        <end position="58"/>
    </location>
</feature>
<feature type="region of interest" description="Disordered" evidence="2">
    <location>
        <begin position="219"/>
        <end position="276"/>
    </location>
</feature>
<feature type="compositionally biased region" description="Polar residues" evidence="2">
    <location>
        <begin position="16"/>
        <end position="27"/>
    </location>
</feature>
<feature type="compositionally biased region" description="Basic residues" evidence="2">
    <location>
        <begin position="255"/>
        <end position="276"/>
    </location>
</feature>
<reference key="1">
    <citation type="journal article" date="2008" name="BMC Genomics">
        <title>Comparative genomic analysis of the gut bacterium Bifidobacterium longum reveals loci susceptible to deletion during pure culture growth.</title>
        <authorList>
            <person name="Lee J.H."/>
            <person name="Karamychev V.N."/>
            <person name="Kozyavkin S.A."/>
            <person name="Mills D."/>
            <person name="Pavlov A.R."/>
            <person name="Pavlova N.V."/>
            <person name="Polouchine N.N."/>
            <person name="Richardson P.M."/>
            <person name="Shakhova V.V."/>
            <person name="Slesarev A.I."/>
            <person name="Weimer B."/>
            <person name="O'Sullivan D.J."/>
        </authorList>
    </citation>
    <scope>NUCLEOTIDE SEQUENCE [LARGE SCALE GENOMIC DNA]</scope>
    <source>
        <strain>DJO10A</strain>
    </source>
</reference>
<accession>B3DQ16</accession>